<keyword id="KW-0002">3D-structure</keyword>
<keyword id="KW-0378">Hydrolase</keyword>
<keyword id="KW-1185">Reference proteome</keyword>
<comment type="miscellaneous">
    <text>Was identified as a high-confidence drug target.</text>
</comment>
<comment type="similarity">
    <text evidence="1">Belongs to the thioesterase PaaI family.</text>
</comment>
<sequence>MQPSPDSPAPLNVTVPFDSELGLQFTELGPDGARAQLDVRPKLLQLTGVVHGGVYCAMIESIASMAAFAWLNSHGEGGSVVGVNNNTDFVRSISSGMVYGTAEPLHRGRRQQLWLVTITDDTDRVVARGQVRLQNLEARP</sequence>
<accession>P9WIM3</accession>
<accession>L0T825</accession>
<accession>P95162</accession>
<gene>
    <name type="ordered locus">Rv1847</name>
    <name type="ORF">MTCY359.26c</name>
</gene>
<proteinExistence type="evidence at protein level"/>
<name>Y1847_MYCTU</name>
<feature type="chain" id="PRO_0000156683" description="Putative esterase Rv1847">
    <location>
        <begin position="1"/>
        <end position="140"/>
    </location>
</feature>
<feature type="helix" evidence="2">
    <location>
        <begin position="16"/>
        <end position="21"/>
    </location>
</feature>
<feature type="strand" evidence="2">
    <location>
        <begin position="24"/>
        <end position="29"/>
    </location>
</feature>
<feature type="strand" evidence="2">
    <location>
        <begin position="32"/>
        <end position="39"/>
    </location>
</feature>
<feature type="helix" evidence="2">
    <location>
        <begin position="41"/>
        <end position="43"/>
    </location>
</feature>
<feature type="strand" evidence="2">
    <location>
        <begin position="48"/>
        <end position="50"/>
    </location>
</feature>
<feature type="helix" evidence="2">
    <location>
        <begin position="52"/>
        <end position="71"/>
    </location>
</feature>
<feature type="strand" evidence="2">
    <location>
        <begin position="79"/>
        <end position="89"/>
    </location>
</feature>
<feature type="strand" evidence="2">
    <location>
        <begin position="95"/>
        <end position="107"/>
    </location>
</feature>
<feature type="strand" evidence="2">
    <location>
        <begin position="109"/>
        <end position="119"/>
    </location>
</feature>
<feature type="strand" evidence="2">
    <location>
        <begin position="125"/>
        <end position="136"/>
    </location>
</feature>
<protein>
    <recommendedName>
        <fullName>Putative esterase Rv1847</fullName>
        <ecNumber>3.1.2.-</ecNumber>
    </recommendedName>
</protein>
<dbReference type="EC" id="3.1.2.-"/>
<dbReference type="EMBL" id="AL123456">
    <property type="protein sequence ID" value="CCP44613.1"/>
    <property type="molecule type" value="Genomic_DNA"/>
</dbReference>
<dbReference type="PIR" id="G70664">
    <property type="entry name" value="G70664"/>
</dbReference>
<dbReference type="RefSeq" id="NP_216363.1">
    <property type="nucleotide sequence ID" value="NC_000962.3"/>
</dbReference>
<dbReference type="RefSeq" id="WP_003899048.1">
    <property type="nucleotide sequence ID" value="NZ_NVQJ01000013.1"/>
</dbReference>
<dbReference type="PDB" id="3S4K">
    <property type="method" value="X-ray"/>
    <property type="resolution" value="1.70 A"/>
    <property type="chains" value="A/B=1-140"/>
</dbReference>
<dbReference type="PDBsum" id="3S4K"/>
<dbReference type="SMR" id="P9WIM3"/>
<dbReference type="FunCoup" id="P9WIM3">
    <property type="interactions" value="1"/>
</dbReference>
<dbReference type="STRING" id="83332.Rv1847"/>
<dbReference type="PaxDb" id="83332-Rv1847"/>
<dbReference type="DNASU" id="885734"/>
<dbReference type="GeneID" id="885734"/>
<dbReference type="KEGG" id="mtu:Rv1847"/>
<dbReference type="KEGG" id="mtv:RVBD_1847"/>
<dbReference type="TubercuList" id="Rv1847"/>
<dbReference type="eggNOG" id="COG2050">
    <property type="taxonomic scope" value="Bacteria"/>
</dbReference>
<dbReference type="InParanoid" id="P9WIM3"/>
<dbReference type="OrthoDB" id="9798208at2"/>
<dbReference type="PhylomeDB" id="P9WIM3"/>
<dbReference type="EvolutionaryTrace" id="P9WIM3"/>
<dbReference type="Proteomes" id="UP000001584">
    <property type="component" value="Chromosome"/>
</dbReference>
<dbReference type="GO" id="GO:0005829">
    <property type="term" value="C:cytosol"/>
    <property type="evidence" value="ECO:0000318"/>
    <property type="project" value="GO_Central"/>
</dbReference>
<dbReference type="GO" id="GO:0061522">
    <property type="term" value="F:1,4-dihydroxy-2-naphthoyl-CoA thioesterase activity"/>
    <property type="evidence" value="ECO:0000318"/>
    <property type="project" value="GO_Central"/>
</dbReference>
<dbReference type="CDD" id="cd03443">
    <property type="entry name" value="PaaI_thioesterase"/>
    <property type="match status" value="1"/>
</dbReference>
<dbReference type="Gene3D" id="3.10.129.10">
    <property type="entry name" value="Hotdog Thioesterase"/>
    <property type="match status" value="1"/>
</dbReference>
<dbReference type="InterPro" id="IPR029069">
    <property type="entry name" value="HotDog_dom_sf"/>
</dbReference>
<dbReference type="InterPro" id="IPR003736">
    <property type="entry name" value="PAAI_dom"/>
</dbReference>
<dbReference type="InterPro" id="IPR006683">
    <property type="entry name" value="Thioestr_dom"/>
</dbReference>
<dbReference type="NCBIfam" id="TIGR00369">
    <property type="entry name" value="unchar_dom_1"/>
    <property type="match status" value="1"/>
</dbReference>
<dbReference type="PANTHER" id="PTHR43240">
    <property type="entry name" value="1,4-DIHYDROXY-2-NAPHTHOYL-COA THIOESTERASE 1"/>
    <property type="match status" value="1"/>
</dbReference>
<dbReference type="PANTHER" id="PTHR43240:SF5">
    <property type="entry name" value="1,4-DIHYDROXY-2-NAPHTHOYL-COA THIOESTERASE 1"/>
    <property type="match status" value="1"/>
</dbReference>
<dbReference type="Pfam" id="PF03061">
    <property type="entry name" value="4HBT"/>
    <property type="match status" value="1"/>
</dbReference>
<dbReference type="SUPFAM" id="SSF54637">
    <property type="entry name" value="Thioesterase/thiol ester dehydrase-isomerase"/>
    <property type="match status" value="1"/>
</dbReference>
<organism>
    <name type="scientific">Mycobacterium tuberculosis (strain ATCC 25618 / H37Rv)</name>
    <dbReference type="NCBI Taxonomy" id="83332"/>
    <lineage>
        <taxon>Bacteria</taxon>
        <taxon>Bacillati</taxon>
        <taxon>Actinomycetota</taxon>
        <taxon>Actinomycetes</taxon>
        <taxon>Mycobacteriales</taxon>
        <taxon>Mycobacteriaceae</taxon>
        <taxon>Mycobacterium</taxon>
        <taxon>Mycobacterium tuberculosis complex</taxon>
    </lineage>
</organism>
<evidence type="ECO:0000305" key="1"/>
<evidence type="ECO:0007829" key="2">
    <source>
        <dbReference type="PDB" id="3S4K"/>
    </source>
</evidence>
<reference key="1">
    <citation type="journal article" date="1998" name="Nature">
        <title>Deciphering the biology of Mycobacterium tuberculosis from the complete genome sequence.</title>
        <authorList>
            <person name="Cole S.T."/>
            <person name="Brosch R."/>
            <person name="Parkhill J."/>
            <person name="Garnier T."/>
            <person name="Churcher C.M."/>
            <person name="Harris D.E."/>
            <person name="Gordon S.V."/>
            <person name="Eiglmeier K."/>
            <person name="Gas S."/>
            <person name="Barry C.E. III"/>
            <person name="Tekaia F."/>
            <person name="Badcock K."/>
            <person name="Basham D."/>
            <person name="Brown D."/>
            <person name="Chillingworth T."/>
            <person name="Connor R."/>
            <person name="Davies R.M."/>
            <person name="Devlin K."/>
            <person name="Feltwell T."/>
            <person name="Gentles S."/>
            <person name="Hamlin N."/>
            <person name="Holroyd S."/>
            <person name="Hornsby T."/>
            <person name="Jagels K."/>
            <person name="Krogh A."/>
            <person name="McLean J."/>
            <person name="Moule S."/>
            <person name="Murphy L.D."/>
            <person name="Oliver S."/>
            <person name="Osborne J."/>
            <person name="Quail M.A."/>
            <person name="Rajandream M.A."/>
            <person name="Rogers J."/>
            <person name="Rutter S."/>
            <person name="Seeger K."/>
            <person name="Skelton S."/>
            <person name="Squares S."/>
            <person name="Squares R."/>
            <person name="Sulston J.E."/>
            <person name="Taylor K."/>
            <person name="Whitehead S."/>
            <person name="Barrell B.G."/>
        </authorList>
    </citation>
    <scope>NUCLEOTIDE SEQUENCE [LARGE SCALE GENOMIC DNA]</scope>
    <source>
        <strain>ATCC 25618 / H37Rv</strain>
    </source>
</reference>
<reference key="2">
    <citation type="journal article" date="2008" name="BMC Syst. Biol.">
        <title>targetTB: a target identification pipeline for Mycobacterium tuberculosis through an interactome, reactome and genome-scale structural analysis.</title>
        <authorList>
            <person name="Raman K."/>
            <person name="Yeturu K."/>
            <person name="Chandra N."/>
        </authorList>
    </citation>
    <scope>IDENTIFICATION AS A DRUG TARGET [LARGE SCALE ANALYSIS]</scope>
</reference>
<reference key="3">
    <citation type="journal article" date="2011" name="Mol. Cell. Proteomics">
        <title>Proteogenomic analysis of Mycobacterium tuberculosis by high resolution mass spectrometry.</title>
        <authorList>
            <person name="Kelkar D.S."/>
            <person name="Kumar D."/>
            <person name="Kumar P."/>
            <person name="Balakrishnan L."/>
            <person name="Muthusamy B."/>
            <person name="Yadav A.K."/>
            <person name="Shrivastava P."/>
            <person name="Marimuthu A."/>
            <person name="Anand S."/>
            <person name="Sundaram H."/>
            <person name="Kingsbury R."/>
            <person name="Harsha H.C."/>
            <person name="Nair B."/>
            <person name="Prasad T.S."/>
            <person name="Chauhan D.S."/>
            <person name="Katoch K."/>
            <person name="Katoch V.M."/>
            <person name="Kumar P."/>
            <person name="Chaerkady R."/>
            <person name="Ramachandran S."/>
            <person name="Dash D."/>
            <person name="Pandey A."/>
        </authorList>
    </citation>
    <scope>IDENTIFICATION BY MASS SPECTROMETRY [LARGE SCALE ANALYSIS]</scope>
    <source>
        <strain>ATCC 25618 / H37Rv</strain>
    </source>
</reference>